<comment type="function">
    <text evidence="1">ATPase required for the correct placement of the division site.</text>
</comment>
<comment type="subcellular location">
    <subcellularLocation>
        <location>Plastid</location>
        <location>Chloroplast</location>
    </subcellularLocation>
</comment>
<comment type="similarity">
    <text evidence="3">Belongs to the ParA family. MinD subfamily.</text>
</comment>
<name>MIND_NEPOL</name>
<protein>
    <recommendedName>
        <fullName>Putative septum site-determining protein MinD</fullName>
    </recommendedName>
</protein>
<dbReference type="EMBL" id="AF137379">
    <property type="protein sequence ID" value="AAD54881.1"/>
    <property type="molecule type" value="Genomic_DNA"/>
</dbReference>
<dbReference type="EMBL" id="AF137379">
    <property type="protein sequence ID" value="AAD54908.1"/>
    <property type="molecule type" value="Genomic_DNA"/>
</dbReference>
<dbReference type="SMR" id="Q9T3P6"/>
<dbReference type="GO" id="GO:0009507">
    <property type="term" value="C:chloroplast"/>
    <property type="evidence" value="ECO:0007669"/>
    <property type="project" value="UniProtKB-SubCell"/>
</dbReference>
<dbReference type="GO" id="GO:0009898">
    <property type="term" value="C:cytoplasmic side of plasma membrane"/>
    <property type="evidence" value="ECO:0007669"/>
    <property type="project" value="TreeGrafter"/>
</dbReference>
<dbReference type="GO" id="GO:0005829">
    <property type="term" value="C:cytosol"/>
    <property type="evidence" value="ECO:0007669"/>
    <property type="project" value="TreeGrafter"/>
</dbReference>
<dbReference type="GO" id="GO:0005524">
    <property type="term" value="F:ATP binding"/>
    <property type="evidence" value="ECO:0007669"/>
    <property type="project" value="UniProtKB-KW"/>
</dbReference>
<dbReference type="GO" id="GO:0016887">
    <property type="term" value="F:ATP hydrolysis activity"/>
    <property type="evidence" value="ECO:0007669"/>
    <property type="project" value="InterPro"/>
</dbReference>
<dbReference type="GO" id="GO:0051301">
    <property type="term" value="P:cell division"/>
    <property type="evidence" value="ECO:0007669"/>
    <property type="project" value="UniProtKB-KW"/>
</dbReference>
<dbReference type="GO" id="GO:0051782">
    <property type="term" value="P:negative regulation of cell division"/>
    <property type="evidence" value="ECO:0007669"/>
    <property type="project" value="TreeGrafter"/>
</dbReference>
<dbReference type="CDD" id="cd02036">
    <property type="entry name" value="MinD"/>
    <property type="match status" value="1"/>
</dbReference>
<dbReference type="FunFam" id="3.40.50.300:FF:000068">
    <property type="entry name" value="Site-determining protein"/>
    <property type="match status" value="1"/>
</dbReference>
<dbReference type="Gene3D" id="3.40.50.300">
    <property type="entry name" value="P-loop containing nucleotide triphosphate hydrolases"/>
    <property type="match status" value="1"/>
</dbReference>
<dbReference type="InterPro" id="IPR002586">
    <property type="entry name" value="CobQ/CobB/MinD/ParA_Nub-bd_dom"/>
</dbReference>
<dbReference type="InterPro" id="IPR010223">
    <property type="entry name" value="MinD"/>
</dbReference>
<dbReference type="InterPro" id="IPR025501">
    <property type="entry name" value="MinD_FleN"/>
</dbReference>
<dbReference type="InterPro" id="IPR027417">
    <property type="entry name" value="P-loop_NTPase"/>
</dbReference>
<dbReference type="InterPro" id="IPR050625">
    <property type="entry name" value="ParA/MinD_ATPase"/>
</dbReference>
<dbReference type="NCBIfam" id="TIGR01968">
    <property type="entry name" value="minD_bact"/>
    <property type="match status" value="1"/>
</dbReference>
<dbReference type="PANTHER" id="PTHR43384:SF6">
    <property type="entry name" value="SEPTUM SITE-DETERMINING PROTEIN MIND HOMOLOG, CHLOROPLASTIC"/>
    <property type="match status" value="1"/>
</dbReference>
<dbReference type="PANTHER" id="PTHR43384">
    <property type="entry name" value="SEPTUM SITE-DETERMINING PROTEIN MIND HOMOLOG, CHLOROPLASTIC-RELATED"/>
    <property type="match status" value="1"/>
</dbReference>
<dbReference type="Pfam" id="PF01656">
    <property type="entry name" value="CbiA"/>
    <property type="match status" value="1"/>
</dbReference>
<dbReference type="PIRSF" id="PIRSF003092">
    <property type="entry name" value="MinD"/>
    <property type="match status" value="1"/>
</dbReference>
<dbReference type="SUPFAM" id="SSF52540">
    <property type="entry name" value="P-loop containing nucleoside triphosphate hydrolases"/>
    <property type="match status" value="1"/>
</dbReference>
<evidence type="ECO:0000250" key="1"/>
<evidence type="ECO:0000250" key="2">
    <source>
        <dbReference type="UniProtKB" id="Q72H90"/>
    </source>
</evidence>
<evidence type="ECO:0000305" key="3"/>
<geneLocation type="chloroplast"/>
<organism>
    <name type="scientific">Nephroselmis olivacea</name>
    <name type="common">Green alga</name>
    <dbReference type="NCBI Taxonomy" id="31312"/>
    <lineage>
        <taxon>Eukaryota</taxon>
        <taxon>Viridiplantae</taxon>
        <taxon>Chlorophyta</taxon>
        <taxon>Nephroselmidophyceae</taxon>
        <taxon>Nephroselmidales</taxon>
        <taxon>Nephroselmidaceae</taxon>
        <taxon>Nephroselmis</taxon>
    </lineage>
</organism>
<accession>Q9T3P6</accession>
<proteinExistence type="inferred from homology"/>
<feature type="chain" id="PRO_0000277442" description="Putative septum site-determining protein MinD">
    <location>
        <begin position="1"/>
        <end position="274"/>
    </location>
</feature>
<feature type="binding site" evidence="2">
    <location>
        <begin position="22"/>
        <end position="29"/>
    </location>
    <ligand>
        <name>ATP</name>
        <dbReference type="ChEBI" id="CHEBI:30616"/>
    </ligand>
</feature>
<gene>
    <name type="primary">minD-A</name>
</gene>
<gene>
    <name type="primary">minD-B</name>
</gene>
<keyword id="KW-0067">ATP-binding</keyword>
<keyword id="KW-0131">Cell cycle</keyword>
<keyword id="KW-0132">Cell division</keyword>
<keyword id="KW-0150">Chloroplast</keyword>
<keyword id="KW-0547">Nucleotide-binding</keyword>
<keyword id="KW-0934">Plastid</keyword>
<keyword id="KW-0717">Septation</keyword>
<reference key="1">
    <citation type="journal article" date="1999" name="Proc. Natl. Acad. Sci. U.S.A.">
        <title>The complete chloroplast DNA sequence of the green alga Nephroselmis olivacea: insights into the architecture of ancestral chloroplast genomes.</title>
        <authorList>
            <person name="Turmel M."/>
            <person name="Otis C."/>
            <person name="Lemieux C."/>
        </authorList>
    </citation>
    <scope>NUCLEOTIDE SEQUENCE [LARGE SCALE GENOMIC DNA]</scope>
    <source>
        <strain>NIES-484 / S-N-5-8</strain>
    </source>
</reference>
<sequence>MTMQDKEPSAPACRVIVITSGKGGVGKTTATANLGMCIARLGYRVALIDADIGLRNLDLLLGLENRVVYTAMEVIEGQCRLEQALIRDKRWKNLSMLAMSKNRQRYNMTRKNMMMIVDSIKERGYQYILIDCPAGIDAGFVNAIAPADEAILVTTPEITAIRDADRVAGLLEANDFYNVRLVANRVRPEMIQQNDMMSVDDVQGMIGVPLLGAIPEDKNVIISTNRGEPLVCQKTITLAGVAFEEAARRLVGLPSPSDSAPSRGWFAAIRRLWS</sequence>